<accession>Q2JCI3</accession>
<comment type="function">
    <text evidence="1">The UvrABC repair system catalyzes the recognition and processing of DNA lesions. UvrC both incises the 5' and 3' sides of the lesion. The N-terminal half is responsible for the 3' incision and the C-terminal half is responsible for the 5' incision.</text>
</comment>
<comment type="subunit">
    <text evidence="1">Interacts with UvrB in an incision complex.</text>
</comment>
<comment type="subcellular location">
    <subcellularLocation>
        <location evidence="1">Cytoplasm</location>
    </subcellularLocation>
</comment>
<comment type="similarity">
    <text evidence="1">Belongs to the UvrC family.</text>
</comment>
<name>UVRC_FRACC</name>
<keyword id="KW-0963">Cytoplasm</keyword>
<keyword id="KW-0227">DNA damage</keyword>
<keyword id="KW-0228">DNA excision</keyword>
<keyword id="KW-0234">DNA repair</keyword>
<keyword id="KW-0267">Excision nuclease</keyword>
<keyword id="KW-1185">Reference proteome</keyword>
<keyword id="KW-0742">SOS response</keyword>
<proteinExistence type="inferred from homology"/>
<evidence type="ECO:0000255" key="1">
    <source>
        <dbReference type="HAMAP-Rule" id="MF_00203"/>
    </source>
</evidence>
<evidence type="ECO:0000256" key="2">
    <source>
        <dbReference type="SAM" id="MobiDB-lite"/>
    </source>
</evidence>
<feature type="chain" id="PRO_0000264895" description="UvrABC system protein C">
    <location>
        <begin position="1"/>
        <end position="705"/>
    </location>
</feature>
<feature type="domain" description="GIY-YIG" evidence="1">
    <location>
        <begin position="16"/>
        <end position="95"/>
    </location>
</feature>
<feature type="domain" description="UVR" evidence="1">
    <location>
        <begin position="208"/>
        <end position="243"/>
    </location>
</feature>
<feature type="region of interest" description="Disordered" evidence="2">
    <location>
        <begin position="315"/>
        <end position="335"/>
    </location>
</feature>
<feature type="region of interest" description="Disordered" evidence="2">
    <location>
        <begin position="683"/>
        <end position="705"/>
    </location>
</feature>
<feature type="compositionally biased region" description="Low complexity" evidence="2">
    <location>
        <begin position="315"/>
        <end position="332"/>
    </location>
</feature>
<protein>
    <recommendedName>
        <fullName evidence="1">UvrABC system protein C</fullName>
        <shortName evidence="1">Protein UvrC</shortName>
    </recommendedName>
    <alternativeName>
        <fullName evidence="1">Excinuclease ABC subunit C</fullName>
    </alternativeName>
</protein>
<reference key="1">
    <citation type="journal article" date="2007" name="Genome Res.">
        <title>Genome characteristics of facultatively symbiotic Frankia sp. strains reflect host range and host plant biogeography.</title>
        <authorList>
            <person name="Normand P."/>
            <person name="Lapierre P."/>
            <person name="Tisa L.S."/>
            <person name="Gogarten J.P."/>
            <person name="Alloisio N."/>
            <person name="Bagnarol E."/>
            <person name="Bassi C.A."/>
            <person name="Berry A.M."/>
            <person name="Bickhart D.M."/>
            <person name="Choisne N."/>
            <person name="Couloux A."/>
            <person name="Cournoyer B."/>
            <person name="Cruveiller S."/>
            <person name="Daubin V."/>
            <person name="Demange N."/>
            <person name="Francino M.P."/>
            <person name="Goltsman E."/>
            <person name="Huang Y."/>
            <person name="Kopp O.R."/>
            <person name="Labarre L."/>
            <person name="Lapidus A."/>
            <person name="Lavire C."/>
            <person name="Marechal J."/>
            <person name="Martinez M."/>
            <person name="Mastronunzio J.E."/>
            <person name="Mullin B.C."/>
            <person name="Niemann J."/>
            <person name="Pujic P."/>
            <person name="Rawnsley T."/>
            <person name="Rouy Z."/>
            <person name="Schenowitz C."/>
            <person name="Sellstedt A."/>
            <person name="Tavares F."/>
            <person name="Tomkins J.P."/>
            <person name="Vallenet D."/>
            <person name="Valverde C."/>
            <person name="Wall L.G."/>
            <person name="Wang Y."/>
            <person name="Medigue C."/>
            <person name="Benson D.R."/>
        </authorList>
    </citation>
    <scope>NUCLEOTIDE SEQUENCE [LARGE SCALE GENOMIC DNA]</scope>
    <source>
        <strain>DSM 45818 / CECT 9043 / HFP020203 / CcI3</strain>
    </source>
</reference>
<organism>
    <name type="scientific">Frankia casuarinae (strain DSM 45818 / CECT 9043 / HFP020203 / CcI3)</name>
    <dbReference type="NCBI Taxonomy" id="106370"/>
    <lineage>
        <taxon>Bacteria</taxon>
        <taxon>Bacillati</taxon>
        <taxon>Actinomycetota</taxon>
        <taxon>Actinomycetes</taxon>
        <taxon>Frankiales</taxon>
        <taxon>Frankiaceae</taxon>
        <taxon>Frankia</taxon>
    </lineage>
</organism>
<gene>
    <name evidence="1" type="primary">uvrC</name>
    <name type="ordered locus">Francci3_1633</name>
</gene>
<sequence>MADPASYRPAPGSIPETPGVYRFRDEHGRVLYVGKAKNLRARLANYFAELHTLHPRTQHMVSSASSVDWTVVSTEVEALQLEYTWIKQFDPRFNVRYRDDKSYPSLAVTLHEEFPRLQVMRGPKRKGVRYFGPYAHAWAIRETLDLLLRVFPARTCSGGVFKRAAQVGRPCLLGYIDRCSAPCVGRVDAATHREIVEDFCDFMSGQTGRYLRRLEREMQQAAQAQEYERAARLRDDIGALRRAVEKQAVVLPDGTDADVIAFAEDELEAAVAVFYVRGGRVRGQRGWVVDKLDEVTTADLVEQFLTQEYLDGTGAASTGTAGSTVPTTTAGSQGEGIPREILVPALPPDVEAVTELLGAARGSRVEVRVPRRGDKRTLLETVERNAKQAFALHRTKRASDLTARSRALAELQEALELPDAPLRIECFDVSNTQGTNVVASMVVFEDGLPRKSEYRRFAIRGIAGREGAGREGAGDDVASMYETIHRRFSRYLAERSRIADIADIAELGDIAGAPGAAQPIDPGTGRPRRFAYPPNLVVVDGGAPQVAAAARALDELGIDAGPGGVALCGLAKRLEEVWLPDTADPVILPRTSEALYLLQRVRDEAHRFAIAYHRQKRSTAMVASALDEVPGLGDTRRKALLRHFGSVAKIRAASAEQIAQVSGIGPRTAAAIVTALARSAPGRADAPAPVVDPRTGEILDTETVS</sequence>
<dbReference type="EMBL" id="CP000249">
    <property type="protein sequence ID" value="ABD11009.1"/>
    <property type="molecule type" value="Genomic_DNA"/>
</dbReference>
<dbReference type="RefSeq" id="WP_011436072.1">
    <property type="nucleotide sequence ID" value="NZ_LRTJ01000018.1"/>
</dbReference>
<dbReference type="SMR" id="Q2JCI3"/>
<dbReference type="STRING" id="106370.Francci3_1633"/>
<dbReference type="KEGG" id="fra:Francci3_1633"/>
<dbReference type="eggNOG" id="COG0322">
    <property type="taxonomic scope" value="Bacteria"/>
</dbReference>
<dbReference type="HOGENOM" id="CLU_014841_2_0_11"/>
<dbReference type="OrthoDB" id="9804933at2"/>
<dbReference type="PhylomeDB" id="Q2JCI3"/>
<dbReference type="Proteomes" id="UP000001937">
    <property type="component" value="Chromosome"/>
</dbReference>
<dbReference type="GO" id="GO:0005737">
    <property type="term" value="C:cytoplasm"/>
    <property type="evidence" value="ECO:0007669"/>
    <property type="project" value="UniProtKB-SubCell"/>
</dbReference>
<dbReference type="GO" id="GO:0009380">
    <property type="term" value="C:excinuclease repair complex"/>
    <property type="evidence" value="ECO:0007669"/>
    <property type="project" value="InterPro"/>
</dbReference>
<dbReference type="GO" id="GO:0003677">
    <property type="term" value="F:DNA binding"/>
    <property type="evidence" value="ECO:0007669"/>
    <property type="project" value="UniProtKB-UniRule"/>
</dbReference>
<dbReference type="GO" id="GO:0009381">
    <property type="term" value="F:excinuclease ABC activity"/>
    <property type="evidence" value="ECO:0007669"/>
    <property type="project" value="UniProtKB-UniRule"/>
</dbReference>
<dbReference type="GO" id="GO:0006289">
    <property type="term" value="P:nucleotide-excision repair"/>
    <property type="evidence" value="ECO:0007669"/>
    <property type="project" value="UniProtKB-UniRule"/>
</dbReference>
<dbReference type="GO" id="GO:0009432">
    <property type="term" value="P:SOS response"/>
    <property type="evidence" value="ECO:0007669"/>
    <property type="project" value="UniProtKB-UniRule"/>
</dbReference>
<dbReference type="CDD" id="cd10434">
    <property type="entry name" value="GIY-YIG_UvrC_Cho"/>
    <property type="match status" value="1"/>
</dbReference>
<dbReference type="FunFam" id="3.40.1440.10:FF:000001">
    <property type="entry name" value="UvrABC system protein C"/>
    <property type="match status" value="1"/>
</dbReference>
<dbReference type="Gene3D" id="1.10.150.20">
    <property type="entry name" value="5' to 3' exonuclease, C-terminal subdomain"/>
    <property type="match status" value="1"/>
</dbReference>
<dbReference type="Gene3D" id="3.40.1440.10">
    <property type="entry name" value="GIY-YIG endonuclease"/>
    <property type="match status" value="1"/>
</dbReference>
<dbReference type="Gene3D" id="4.10.860.10">
    <property type="entry name" value="UVR domain"/>
    <property type="match status" value="1"/>
</dbReference>
<dbReference type="Gene3D" id="3.30.420.340">
    <property type="entry name" value="UvrC, RNAse H endonuclease domain"/>
    <property type="match status" value="1"/>
</dbReference>
<dbReference type="HAMAP" id="MF_00203">
    <property type="entry name" value="UvrC"/>
    <property type="match status" value="1"/>
</dbReference>
<dbReference type="InterPro" id="IPR000305">
    <property type="entry name" value="GIY-YIG_endonuc"/>
</dbReference>
<dbReference type="InterPro" id="IPR035901">
    <property type="entry name" value="GIY-YIG_endonuc_sf"/>
</dbReference>
<dbReference type="InterPro" id="IPR047296">
    <property type="entry name" value="GIY-YIG_UvrC_Cho"/>
</dbReference>
<dbReference type="InterPro" id="IPR003583">
    <property type="entry name" value="Hlx-hairpin-Hlx_DNA-bd_motif"/>
</dbReference>
<dbReference type="InterPro" id="IPR010994">
    <property type="entry name" value="RuvA_2-like"/>
</dbReference>
<dbReference type="InterPro" id="IPR001943">
    <property type="entry name" value="UVR_dom"/>
</dbReference>
<dbReference type="InterPro" id="IPR036876">
    <property type="entry name" value="UVR_dom_sf"/>
</dbReference>
<dbReference type="InterPro" id="IPR050066">
    <property type="entry name" value="UvrABC_protein_C"/>
</dbReference>
<dbReference type="InterPro" id="IPR004791">
    <property type="entry name" value="UvrC"/>
</dbReference>
<dbReference type="InterPro" id="IPR001162">
    <property type="entry name" value="UvrC_RNase_H_dom"/>
</dbReference>
<dbReference type="InterPro" id="IPR038476">
    <property type="entry name" value="UvrC_RNase_H_dom_sf"/>
</dbReference>
<dbReference type="NCBIfam" id="NF001824">
    <property type="entry name" value="PRK00558.1-5"/>
    <property type="match status" value="1"/>
</dbReference>
<dbReference type="NCBIfam" id="TIGR00194">
    <property type="entry name" value="uvrC"/>
    <property type="match status" value="1"/>
</dbReference>
<dbReference type="PANTHER" id="PTHR30562:SF1">
    <property type="entry name" value="UVRABC SYSTEM PROTEIN C"/>
    <property type="match status" value="1"/>
</dbReference>
<dbReference type="PANTHER" id="PTHR30562">
    <property type="entry name" value="UVRC/OXIDOREDUCTASE"/>
    <property type="match status" value="1"/>
</dbReference>
<dbReference type="Pfam" id="PF01541">
    <property type="entry name" value="GIY-YIG"/>
    <property type="match status" value="1"/>
</dbReference>
<dbReference type="Pfam" id="PF14520">
    <property type="entry name" value="HHH_5"/>
    <property type="match status" value="1"/>
</dbReference>
<dbReference type="Pfam" id="PF02151">
    <property type="entry name" value="UVR"/>
    <property type="match status" value="1"/>
</dbReference>
<dbReference type="Pfam" id="PF22920">
    <property type="entry name" value="UvrC_RNaseH"/>
    <property type="match status" value="1"/>
</dbReference>
<dbReference type="Pfam" id="PF08459">
    <property type="entry name" value="UvrC_RNaseH_dom"/>
    <property type="match status" value="1"/>
</dbReference>
<dbReference type="SMART" id="SM00465">
    <property type="entry name" value="GIYc"/>
    <property type="match status" value="1"/>
</dbReference>
<dbReference type="SMART" id="SM00278">
    <property type="entry name" value="HhH1"/>
    <property type="match status" value="2"/>
</dbReference>
<dbReference type="SUPFAM" id="SSF46600">
    <property type="entry name" value="C-terminal UvrC-binding domain of UvrB"/>
    <property type="match status" value="1"/>
</dbReference>
<dbReference type="SUPFAM" id="SSF82771">
    <property type="entry name" value="GIY-YIG endonuclease"/>
    <property type="match status" value="1"/>
</dbReference>
<dbReference type="SUPFAM" id="SSF47781">
    <property type="entry name" value="RuvA domain 2-like"/>
    <property type="match status" value="1"/>
</dbReference>
<dbReference type="PROSITE" id="PS50164">
    <property type="entry name" value="GIY_YIG"/>
    <property type="match status" value="1"/>
</dbReference>
<dbReference type="PROSITE" id="PS50151">
    <property type="entry name" value="UVR"/>
    <property type="match status" value="1"/>
</dbReference>
<dbReference type="PROSITE" id="PS50165">
    <property type="entry name" value="UVRC"/>
    <property type="match status" value="1"/>
</dbReference>